<evidence type="ECO:0000255" key="1">
    <source>
        <dbReference type="HAMAP-Rule" id="MF_01382"/>
    </source>
</evidence>
<keyword id="KW-0067">ATP-binding</keyword>
<keyword id="KW-0997">Cell inner membrane</keyword>
<keyword id="KW-1003">Cell membrane</keyword>
<keyword id="KW-0963">Cytoplasm</keyword>
<keyword id="KW-0472">Membrane</keyword>
<keyword id="KW-0479">Metal-binding</keyword>
<keyword id="KW-0547">Nucleotide-binding</keyword>
<keyword id="KW-0653">Protein transport</keyword>
<keyword id="KW-1278">Translocase</keyword>
<keyword id="KW-0811">Translocation</keyword>
<keyword id="KW-0813">Transport</keyword>
<keyword id="KW-0862">Zinc</keyword>
<comment type="function">
    <text evidence="1">Part of the Sec protein translocase complex. Interacts with the SecYEG preprotein conducting channel. Has a central role in coupling the hydrolysis of ATP to the transfer of proteins into and across the cell membrane, serving both as a receptor for the preprotein-SecB complex and as an ATP-driven molecular motor driving the stepwise translocation of polypeptide chains across the membrane.</text>
</comment>
<comment type="catalytic activity">
    <reaction evidence="1">
        <text>ATP + H2O + cellular proteinSide 1 = ADP + phosphate + cellular proteinSide 2.</text>
        <dbReference type="EC" id="7.4.2.8"/>
    </reaction>
</comment>
<comment type="cofactor">
    <cofactor evidence="1">
        <name>Zn(2+)</name>
        <dbReference type="ChEBI" id="CHEBI:29105"/>
    </cofactor>
    <text evidence="1">May bind 1 zinc ion per subunit.</text>
</comment>
<comment type="subunit">
    <text evidence="1">Monomer and homodimer. Part of the essential Sec protein translocation apparatus which comprises SecA, SecYEG and auxiliary proteins SecDF-YajC and YidC.</text>
</comment>
<comment type="subcellular location">
    <subcellularLocation>
        <location evidence="1">Cell inner membrane</location>
        <topology evidence="1">Peripheral membrane protein</topology>
        <orientation evidence="1">Cytoplasmic side</orientation>
    </subcellularLocation>
    <subcellularLocation>
        <location evidence="1">Cytoplasm</location>
    </subcellularLocation>
    <text evidence="1">Distribution is 50-50.</text>
</comment>
<comment type="similarity">
    <text evidence="1">Belongs to the SecA family.</text>
</comment>
<protein>
    <recommendedName>
        <fullName evidence="1">Protein translocase subunit SecA</fullName>
        <ecNumber evidence="1">7.4.2.8</ecNumber>
    </recommendedName>
</protein>
<accession>A6UCG8</accession>
<name>SECA_SINMW</name>
<reference key="1">
    <citation type="submission" date="2007-06" db="EMBL/GenBank/DDBJ databases">
        <title>Complete sequence of Sinorhizobium medicae WSM419 chromosome.</title>
        <authorList>
            <consortium name="US DOE Joint Genome Institute"/>
            <person name="Copeland A."/>
            <person name="Lucas S."/>
            <person name="Lapidus A."/>
            <person name="Barry K."/>
            <person name="Glavina del Rio T."/>
            <person name="Dalin E."/>
            <person name="Tice H."/>
            <person name="Pitluck S."/>
            <person name="Chain P."/>
            <person name="Malfatti S."/>
            <person name="Shin M."/>
            <person name="Vergez L."/>
            <person name="Schmutz J."/>
            <person name="Larimer F."/>
            <person name="Land M."/>
            <person name="Hauser L."/>
            <person name="Kyrpides N."/>
            <person name="Mikhailova N."/>
            <person name="Reeve W.G."/>
            <person name="Richardson P."/>
        </authorList>
    </citation>
    <scope>NUCLEOTIDE SEQUENCE [LARGE SCALE GENOMIC DNA]</scope>
    <source>
        <strain>WSM419</strain>
    </source>
</reference>
<proteinExistence type="inferred from homology"/>
<organism>
    <name type="scientific">Sinorhizobium medicae (strain WSM419)</name>
    <name type="common">Ensifer medicae</name>
    <dbReference type="NCBI Taxonomy" id="366394"/>
    <lineage>
        <taxon>Bacteria</taxon>
        <taxon>Pseudomonadati</taxon>
        <taxon>Pseudomonadota</taxon>
        <taxon>Alphaproteobacteria</taxon>
        <taxon>Hyphomicrobiales</taxon>
        <taxon>Rhizobiaceae</taxon>
        <taxon>Sinorhizobium/Ensifer group</taxon>
        <taxon>Sinorhizobium</taxon>
    </lineage>
</organism>
<sequence>MVSLGGFARKLFGSANDRRVRGYKGRVDAINALEAEMKALSDEALAAKTAEFRREIADGKSLDDILVPAFAVVREAARRVLGLRPFDVQLIGGMILHERAIAEMKTGEGKTLVATLPVYLNALAGKGVHVVTVNDYLAQRDAGMMGRIYGFLGMSTGVIVHGLSDEQRRDAYACDVTYATNNELGFDYLRDNMKYERSQMVQRGHFFAIVDEVDSILVDEARTPLIISGPLDDRSDLYNTINEFIPRLSPEDYEIDEKQRSANFSEDGTEKLENMLREAGLLKGESLYDIENVAIVHHVNNALKAHKLFTRDKDYIVRNGEIVIIDEFTGRMMPGRRYSEGQHQALEAKEKVQIQPENQTLASITFQNYFRMYDKLAGMTGTAATEAEEFGNIYGLEVLEVPTNLPIKRIDEDDEVYRTVGEKFKAIIEEIKSAHERGQPMLVGTTSIEKSELLAEMLKKDGFSKFQVLNARYHEQEAFIVAQAGVPGAITIATNMAGRGTDIQLGGNPDMRIQQELSDVEPGAERESREKAIREEVQVLKEKALAAGGLYVLATERHESRRIDNQLRGRSGRQGDPGRSKFYLSLQDDLMRIFGSDRMDGMLQKLGLKEGEAIVHPWINKALERAQKKVEARNFDIRKNLLKYDDVLNDQRKVIFEQRIELMDAESVTDTVTDMRNEVIEEVVAKRIPERAYAEKWDAEGLKADVQQYLNLDLPIVEWVAEEGIAEDDIRERITAAADQAAADRAERFGPEVMQYVERSVILQTLDHLWREHIVNLDHLRSVIGFRGYAQRDPLQEYKSEAFELFQALLGNLRQAVTAQLMRVELVREAPEEPQPLPPMQAHHIDPLTGEDDFAPAGDTLLAVAPTTRDPADPSTWGKVSRNEACPCGSGKKYKHCHGVYEA</sequence>
<dbReference type="EC" id="7.4.2.8" evidence="1"/>
<dbReference type="EMBL" id="CP000738">
    <property type="protein sequence ID" value="ABR61348.1"/>
    <property type="molecule type" value="Genomic_DNA"/>
</dbReference>
<dbReference type="RefSeq" id="WP_012066739.1">
    <property type="nucleotide sequence ID" value="NC_009636.1"/>
</dbReference>
<dbReference type="RefSeq" id="YP_001328183.1">
    <property type="nucleotide sequence ID" value="NC_009636.1"/>
</dbReference>
<dbReference type="SMR" id="A6UCG8"/>
<dbReference type="STRING" id="366394.Smed_2518"/>
<dbReference type="GeneID" id="61611955"/>
<dbReference type="KEGG" id="smd:Smed_2518"/>
<dbReference type="PATRIC" id="fig|366394.8.peg.5708"/>
<dbReference type="eggNOG" id="COG0653">
    <property type="taxonomic scope" value="Bacteria"/>
</dbReference>
<dbReference type="HOGENOM" id="CLU_005314_3_0_5"/>
<dbReference type="OrthoDB" id="9805579at2"/>
<dbReference type="Proteomes" id="UP000001108">
    <property type="component" value="Chromosome"/>
</dbReference>
<dbReference type="GO" id="GO:0031522">
    <property type="term" value="C:cell envelope Sec protein transport complex"/>
    <property type="evidence" value="ECO:0007669"/>
    <property type="project" value="TreeGrafter"/>
</dbReference>
<dbReference type="GO" id="GO:0005829">
    <property type="term" value="C:cytosol"/>
    <property type="evidence" value="ECO:0007669"/>
    <property type="project" value="TreeGrafter"/>
</dbReference>
<dbReference type="GO" id="GO:0005886">
    <property type="term" value="C:plasma membrane"/>
    <property type="evidence" value="ECO:0007669"/>
    <property type="project" value="UniProtKB-SubCell"/>
</dbReference>
<dbReference type="GO" id="GO:0005524">
    <property type="term" value="F:ATP binding"/>
    <property type="evidence" value="ECO:0007669"/>
    <property type="project" value="UniProtKB-UniRule"/>
</dbReference>
<dbReference type="GO" id="GO:0046872">
    <property type="term" value="F:metal ion binding"/>
    <property type="evidence" value="ECO:0007669"/>
    <property type="project" value="UniProtKB-KW"/>
</dbReference>
<dbReference type="GO" id="GO:0008564">
    <property type="term" value="F:protein-exporting ATPase activity"/>
    <property type="evidence" value="ECO:0007669"/>
    <property type="project" value="UniProtKB-EC"/>
</dbReference>
<dbReference type="GO" id="GO:0065002">
    <property type="term" value="P:intracellular protein transmembrane transport"/>
    <property type="evidence" value="ECO:0007669"/>
    <property type="project" value="UniProtKB-UniRule"/>
</dbReference>
<dbReference type="GO" id="GO:0017038">
    <property type="term" value="P:protein import"/>
    <property type="evidence" value="ECO:0007669"/>
    <property type="project" value="InterPro"/>
</dbReference>
<dbReference type="GO" id="GO:0006605">
    <property type="term" value="P:protein targeting"/>
    <property type="evidence" value="ECO:0007669"/>
    <property type="project" value="UniProtKB-UniRule"/>
</dbReference>
<dbReference type="GO" id="GO:0043952">
    <property type="term" value="P:protein transport by the Sec complex"/>
    <property type="evidence" value="ECO:0007669"/>
    <property type="project" value="TreeGrafter"/>
</dbReference>
<dbReference type="CDD" id="cd17928">
    <property type="entry name" value="DEXDc_SecA"/>
    <property type="match status" value="1"/>
</dbReference>
<dbReference type="CDD" id="cd18803">
    <property type="entry name" value="SF2_C_secA"/>
    <property type="match status" value="1"/>
</dbReference>
<dbReference type="FunFam" id="3.90.1440.10:FF:000001">
    <property type="entry name" value="Preprotein translocase subunit SecA"/>
    <property type="match status" value="1"/>
</dbReference>
<dbReference type="FunFam" id="1.10.3060.10:FF:000003">
    <property type="entry name" value="Protein translocase subunit SecA"/>
    <property type="match status" value="1"/>
</dbReference>
<dbReference type="FunFam" id="3.40.50.300:FF:000334">
    <property type="entry name" value="Protein translocase subunit SecA"/>
    <property type="match status" value="1"/>
</dbReference>
<dbReference type="FunFam" id="3.40.50.300:FF:001790">
    <property type="entry name" value="Protein translocase subunit SecA"/>
    <property type="match status" value="1"/>
</dbReference>
<dbReference type="Gene3D" id="3.10.450.50">
    <property type="match status" value="1"/>
</dbReference>
<dbReference type="Gene3D" id="1.10.3060.10">
    <property type="entry name" value="Helical scaffold and wing domains of SecA"/>
    <property type="match status" value="1"/>
</dbReference>
<dbReference type="Gene3D" id="3.40.50.300">
    <property type="entry name" value="P-loop containing nucleotide triphosphate hydrolases"/>
    <property type="match status" value="2"/>
</dbReference>
<dbReference type="Gene3D" id="3.90.1440.10">
    <property type="entry name" value="SecA, preprotein cross-linking domain"/>
    <property type="match status" value="1"/>
</dbReference>
<dbReference type="HAMAP" id="MF_01382">
    <property type="entry name" value="SecA"/>
    <property type="match status" value="1"/>
</dbReference>
<dbReference type="InterPro" id="IPR014001">
    <property type="entry name" value="Helicase_ATP-bd"/>
</dbReference>
<dbReference type="InterPro" id="IPR027417">
    <property type="entry name" value="P-loop_NTPase"/>
</dbReference>
<dbReference type="InterPro" id="IPR004027">
    <property type="entry name" value="SEC_C_motif"/>
</dbReference>
<dbReference type="InterPro" id="IPR000185">
    <property type="entry name" value="SecA"/>
</dbReference>
<dbReference type="InterPro" id="IPR020937">
    <property type="entry name" value="SecA_CS"/>
</dbReference>
<dbReference type="InterPro" id="IPR011115">
    <property type="entry name" value="SecA_DEAD"/>
</dbReference>
<dbReference type="InterPro" id="IPR014018">
    <property type="entry name" value="SecA_motor_DEAD"/>
</dbReference>
<dbReference type="InterPro" id="IPR011130">
    <property type="entry name" value="SecA_preprotein_X-link_dom"/>
</dbReference>
<dbReference type="InterPro" id="IPR044722">
    <property type="entry name" value="SecA_SF2_C"/>
</dbReference>
<dbReference type="InterPro" id="IPR011116">
    <property type="entry name" value="SecA_Wing/Scaffold"/>
</dbReference>
<dbReference type="InterPro" id="IPR036266">
    <property type="entry name" value="SecA_Wing/Scaffold_sf"/>
</dbReference>
<dbReference type="InterPro" id="IPR036670">
    <property type="entry name" value="SecA_X-link_sf"/>
</dbReference>
<dbReference type="NCBIfam" id="NF009538">
    <property type="entry name" value="PRK12904.1"/>
    <property type="match status" value="1"/>
</dbReference>
<dbReference type="NCBIfam" id="TIGR00963">
    <property type="entry name" value="secA"/>
    <property type="match status" value="1"/>
</dbReference>
<dbReference type="PANTHER" id="PTHR30612:SF0">
    <property type="entry name" value="CHLOROPLAST PROTEIN-TRANSPORTING ATPASE"/>
    <property type="match status" value="1"/>
</dbReference>
<dbReference type="PANTHER" id="PTHR30612">
    <property type="entry name" value="SECA INNER MEMBRANE COMPONENT OF SEC PROTEIN SECRETION SYSTEM"/>
    <property type="match status" value="1"/>
</dbReference>
<dbReference type="Pfam" id="PF21090">
    <property type="entry name" value="P-loop_SecA"/>
    <property type="match status" value="1"/>
</dbReference>
<dbReference type="Pfam" id="PF02810">
    <property type="entry name" value="SEC-C"/>
    <property type="match status" value="1"/>
</dbReference>
<dbReference type="Pfam" id="PF07517">
    <property type="entry name" value="SecA_DEAD"/>
    <property type="match status" value="1"/>
</dbReference>
<dbReference type="Pfam" id="PF01043">
    <property type="entry name" value="SecA_PP_bind"/>
    <property type="match status" value="1"/>
</dbReference>
<dbReference type="Pfam" id="PF07516">
    <property type="entry name" value="SecA_SW"/>
    <property type="match status" value="1"/>
</dbReference>
<dbReference type="PRINTS" id="PR00906">
    <property type="entry name" value="SECA"/>
</dbReference>
<dbReference type="SMART" id="SM00957">
    <property type="entry name" value="SecA_DEAD"/>
    <property type="match status" value="1"/>
</dbReference>
<dbReference type="SMART" id="SM00958">
    <property type="entry name" value="SecA_PP_bind"/>
    <property type="match status" value="1"/>
</dbReference>
<dbReference type="SUPFAM" id="SSF81886">
    <property type="entry name" value="Helical scaffold and wing domains of SecA"/>
    <property type="match status" value="1"/>
</dbReference>
<dbReference type="SUPFAM" id="SSF52540">
    <property type="entry name" value="P-loop containing nucleoside triphosphate hydrolases"/>
    <property type="match status" value="2"/>
</dbReference>
<dbReference type="SUPFAM" id="SSF81767">
    <property type="entry name" value="Pre-protein crosslinking domain of SecA"/>
    <property type="match status" value="1"/>
</dbReference>
<dbReference type="PROSITE" id="PS01312">
    <property type="entry name" value="SECA"/>
    <property type="match status" value="1"/>
</dbReference>
<dbReference type="PROSITE" id="PS51196">
    <property type="entry name" value="SECA_MOTOR_DEAD"/>
    <property type="match status" value="1"/>
</dbReference>
<feature type="chain" id="PRO_0000321008" description="Protein translocase subunit SecA">
    <location>
        <begin position="1"/>
        <end position="903"/>
    </location>
</feature>
<feature type="binding site" evidence="1">
    <location>
        <position position="89"/>
    </location>
    <ligand>
        <name>ATP</name>
        <dbReference type="ChEBI" id="CHEBI:30616"/>
    </ligand>
</feature>
<feature type="binding site" evidence="1">
    <location>
        <begin position="107"/>
        <end position="111"/>
    </location>
    <ligand>
        <name>ATP</name>
        <dbReference type="ChEBI" id="CHEBI:30616"/>
    </ligand>
</feature>
<feature type="binding site" evidence="1">
    <location>
        <position position="502"/>
    </location>
    <ligand>
        <name>ATP</name>
        <dbReference type="ChEBI" id="CHEBI:30616"/>
    </ligand>
</feature>
<feature type="binding site" evidence="1">
    <location>
        <position position="886"/>
    </location>
    <ligand>
        <name>Zn(2+)</name>
        <dbReference type="ChEBI" id="CHEBI:29105"/>
    </ligand>
</feature>
<feature type="binding site" evidence="1">
    <location>
        <position position="888"/>
    </location>
    <ligand>
        <name>Zn(2+)</name>
        <dbReference type="ChEBI" id="CHEBI:29105"/>
    </ligand>
</feature>
<feature type="binding site" evidence="1">
    <location>
        <position position="897"/>
    </location>
    <ligand>
        <name>Zn(2+)</name>
        <dbReference type="ChEBI" id="CHEBI:29105"/>
    </ligand>
</feature>
<feature type="binding site" evidence="1">
    <location>
        <position position="898"/>
    </location>
    <ligand>
        <name>Zn(2+)</name>
        <dbReference type="ChEBI" id="CHEBI:29105"/>
    </ligand>
</feature>
<gene>
    <name evidence="1" type="primary">secA</name>
    <name type="ordered locus">Smed_2518</name>
</gene>